<comment type="similarity">
    <text evidence="4">Belongs to the GDAP2 family.</text>
</comment>
<evidence type="ECO:0000250" key="1">
    <source>
        <dbReference type="UniProtKB" id="Q9NXN4"/>
    </source>
</evidence>
<evidence type="ECO:0000255" key="2">
    <source>
        <dbReference type="PROSITE-ProRule" id="PRU00490"/>
    </source>
</evidence>
<evidence type="ECO:0000256" key="3">
    <source>
        <dbReference type="SAM" id="MobiDB-lite"/>
    </source>
</evidence>
<evidence type="ECO:0000305" key="4"/>
<gene>
    <name type="primary">GDAP2</name>
</gene>
<feature type="chain" id="PRO_0000331393" description="Ganglioside-induced differentiation-associated protein 2">
    <location>
        <begin position="1"/>
        <end position="497"/>
    </location>
</feature>
<feature type="domain" description="Macro" evidence="2">
    <location>
        <begin position="43"/>
        <end position="223"/>
    </location>
</feature>
<feature type="domain" description="CRAL-TRIO">
    <location>
        <begin position="333"/>
        <end position="481"/>
    </location>
</feature>
<feature type="region of interest" description="Disordered" evidence="3">
    <location>
        <begin position="251"/>
        <end position="273"/>
    </location>
</feature>
<feature type="compositionally biased region" description="Basic and acidic residues" evidence="3">
    <location>
        <begin position="253"/>
        <end position="263"/>
    </location>
</feature>
<feature type="modified residue" description="Phosphoserine" evidence="1">
    <location>
        <position position="280"/>
    </location>
</feature>
<dbReference type="EMBL" id="BC112475">
    <property type="protein sequence ID" value="AAI12476.1"/>
    <property type="molecule type" value="mRNA"/>
</dbReference>
<dbReference type="RefSeq" id="NP_001039478.1">
    <property type="nucleotide sequence ID" value="NM_001046013.2"/>
</dbReference>
<dbReference type="RefSeq" id="XP_059739055.1">
    <property type="nucleotide sequence ID" value="XM_059883072.1"/>
</dbReference>
<dbReference type="SMR" id="Q2KIX2"/>
<dbReference type="FunCoup" id="Q2KIX2">
    <property type="interactions" value="3884"/>
</dbReference>
<dbReference type="STRING" id="9913.ENSBTAP00000021791"/>
<dbReference type="PaxDb" id="9913-ENSBTAP00000021791"/>
<dbReference type="Ensembl" id="ENSBTAT00000112504.1">
    <property type="protein sequence ID" value="ENSBTAP00000076558.1"/>
    <property type="gene ID" value="ENSBTAG00000016387.7"/>
</dbReference>
<dbReference type="GeneID" id="508774"/>
<dbReference type="KEGG" id="bta:508774"/>
<dbReference type="CTD" id="54834"/>
<dbReference type="VGNC" id="VGNC:29297">
    <property type="gene designation" value="GDAP2"/>
</dbReference>
<dbReference type="eggNOG" id="KOG2633">
    <property type="taxonomic scope" value="Eukaryota"/>
</dbReference>
<dbReference type="GeneTree" id="ENSGT00940000156336"/>
<dbReference type="HOGENOM" id="CLU_026877_0_0_1"/>
<dbReference type="InParanoid" id="Q2KIX2"/>
<dbReference type="OrthoDB" id="365077at2759"/>
<dbReference type="TreeFam" id="TF324164"/>
<dbReference type="Proteomes" id="UP000009136">
    <property type="component" value="Chromosome 3"/>
</dbReference>
<dbReference type="CDD" id="cd02905">
    <property type="entry name" value="Macro_GDAP2-like"/>
    <property type="match status" value="1"/>
</dbReference>
<dbReference type="CDD" id="cd00170">
    <property type="entry name" value="SEC14"/>
    <property type="match status" value="1"/>
</dbReference>
<dbReference type="FunFam" id="3.40.525.10:FF:000014">
    <property type="entry name" value="Ganglioside-induced differentiation-associated protein 2"/>
    <property type="match status" value="1"/>
</dbReference>
<dbReference type="FunFam" id="3.40.220.10:FF:000006">
    <property type="entry name" value="ganglioside-induced differentiation-associated protein 2 isoform X1"/>
    <property type="match status" value="1"/>
</dbReference>
<dbReference type="Gene3D" id="3.40.525.10">
    <property type="entry name" value="CRAL-TRIO lipid binding domain"/>
    <property type="match status" value="1"/>
</dbReference>
<dbReference type="Gene3D" id="3.40.220.10">
    <property type="entry name" value="Leucine Aminopeptidase, subunit E, domain 1"/>
    <property type="match status" value="1"/>
</dbReference>
<dbReference type="InterPro" id="IPR001251">
    <property type="entry name" value="CRAL-TRIO_dom"/>
</dbReference>
<dbReference type="InterPro" id="IPR036865">
    <property type="entry name" value="CRAL-TRIO_dom_sf"/>
</dbReference>
<dbReference type="InterPro" id="IPR002589">
    <property type="entry name" value="Macro_dom"/>
</dbReference>
<dbReference type="InterPro" id="IPR043472">
    <property type="entry name" value="Macro_dom-like"/>
</dbReference>
<dbReference type="InterPro" id="IPR035793">
    <property type="entry name" value="Macro_GDAP2"/>
</dbReference>
<dbReference type="PANTHER" id="PTHR11106">
    <property type="entry name" value="GANGLIOSIDE INDUCED DIFFERENTIATION ASSOCIATED PROTEIN 2-RELATED"/>
    <property type="match status" value="1"/>
</dbReference>
<dbReference type="PANTHER" id="PTHR11106:SF72">
    <property type="entry name" value="GANGLIOSIDE-INDUCED DIFFERENTIATION-ASSOCIATED PROTEIN 2"/>
    <property type="match status" value="1"/>
</dbReference>
<dbReference type="Pfam" id="PF13716">
    <property type="entry name" value="CRAL_TRIO_2"/>
    <property type="match status" value="1"/>
</dbReference>
<dbReference type="Pfam" id="PF01661">
    <property type="entry name" value="Macro"/>
    <property type="match status" value="1"/>
</dbReference>
<dbReference type="SMART" id="SM00506">
    <property type="entry name" value="A1pp"/>
    <property type="match status" value="1"/>
</dbReference>
<dbReference type="SMART" id="SM00516">
    <property type="entry name" value="SEC14"/>
    <property type="match status" value="1"/>
</dbReference>
<dbReference type="SUPFAM" id="SSF52087">
    <property type="entry name" value="CRAL/TRIO domain"/>
    <property type="match status" value="1"/>
</dbReference>
<dbReference type="SUPFAM" id="SSF52949">
    <property type="entry name" value="Macro domain-like"/>
    <property type="match status" value="1"/>
</dbReference>
<dbReference type="PROSITE" id="PS51154">
    <property type="entry name" value="MACRO"/>
    <property type="match status" value="1"/>
</dbReference>
<name>GDAP2_BOVIN</name>
<sequence>MDPLGAPSQFVDVDTLPSWGNSCEDQLNASEIAAETYQEETIRSPFLYNKDINGKVVLWKGDVALLNCTAIVNTSNESLTDKNPVSESIFMLAGPDLKEDLQKLRGCRTGEAKLTKGFNLAARFIIHTVGPKYKSRYRTAAESSLYSCYRNVLQLAKEQSMSSVGFCVINSAKRGYPLEDATHIALRTVRRFLEIHGETLEKVVFAVSELEEATYQKLLPLYFPRSLKEESRSLPCLPADIGNAEGEPVVPERQIRISEKPGAPEDNQEEEDEGLGVDLSFIGSHAFARMEGDIDKQRRLILQGQLSEAALQKQHQRNYNRWLCQARSEDLSDIASLKALYQTGVDNCGRTVMVVVGRNIPVTLIDMDKALLYFIHVMDHIAVKEYVLVYFHTLTSEYNHLDSDFLKKLYDVVDVKYKRNLKAVYFVHPTFRSKVSTWFFTTFSVSGLKDKIHHVDSLHQLFSAISPEQIDFPPFVLEYDARENGPYYTSYLPSPDL</sequence>
<protein>
    <recommendedName>
        <fullName>Ganglioside-induced differentiation-associated protein 2</fullName>
    </recommendedName>
</protein>
<accession>Q2KIX2</accession>
<reference key="1">
    <citation type="submission" date="2006-01" db="EMBL/GenBank/DDBJ databases">
        <authorList>
            <consortium name="NIH - Mammalian Gene Collection (MGC) project"/>
        </authorList>
    </citation>
    <scope>NUCLEOTIDE SEQUENCE [LARGE SCALE MRNA]</scope>
    <source>
        <strain>Hereford</strain>
        <tissue>Testis</tissue>
    </source>
</reference>
<proteinExistence type="evidence at transcript level"/>
<organism>
    <name type="scientific">Bos taurus</name>
    <name type="common">Bovine</name>
    <dbReference type="NCBI Taxonomy" id="9913"/>
    <lineage>
        <taxon>Eukaryota</taxon>
        <taxon>Metazoa</taxon>
        <taxon>Chordata</taxon>
        <taxon>Craniata</taxon>
        <taxon>Vertebrata</taxon>
        <taxon>Euteleostomi</taxon>
        <taxon>Mammalia</taxon>
        <taxon>Eutheria</taxon>
        <taxon>Laurasiatheria</taxon>
        <taxon>Artiodactyla</taxon>
        <taxon>Ruminantia</taxon>
        <taxon>Pecora</taxon>
        <taxon>Bovidae</taxon>
        <taxon>Bovinae</taxon>
        <taxon>Bos</taxon>
    </lineage>
</organism>
<keyword id="KW-0597">Phosphoprotein</keyword>
<keyword id="KW-1185">Reference proteome</keyword>